<name>URE3_ECTM1</name>
<proteinExistence type="inferred from homology"/>
<protein>
    <recommendedName>
        <fullName evidence="1">Urease subunit gamma</fullName>
        <ecNumber evidence="1">3.5.1.5</ecNumber>
    </recommendedName>
    <alternativeName>
        <fullName evidence="1">Urea amidohydrolase subunit gamma</fullName>
    </alternativeName>
</protein>
<reference key="1">
    <citation type="submission" date="2007-04" db="EMBL/GenBank/DDBJ databases">
        <title>Complete sequence of Pseudomonas mendocina ymp.</title>
        <authorList>
            <consortium name="US DOE Joint Genome Institute"/>
            <person name="Copeland A."/>
            <person name="Lucas S."/>
            <person name="Lapidus A."/>
            <person name="Barry K."/>
            <person name="Glavina del Rio T."/>
            <person name="Dalin E."/>
            <person name="Tice H."/>
            <person name="Pitluck S."/>
            <person name="Kiss H."/>
            <person name="Brettin T."/>
            <person name="Detter J.C."/>
            <person name="Bruce D."/>
            <person name="Han C."/>
            <person name="Schmutz J."/>
            <person name="Larimer F."/>
            <person name="Land M."/>
            <person name="Hauser L."/>
            <person name="Kyrpides N."/>
            <person name="Mikhailova N."/>
            <person name="Hersman L."/>
            <person name="Dubois J."/>
            <person name="Maurice P."/>
            <person name="Richardson P."/>
        </authorList>
    </citation>
    <scope>NUCLEOTIDE SEQUENCE [LARGE SCALE GENOMIC DNA]</scope>
    <source>
        <strain>ymp</strain>
    </source>
</reference>
<sequence>MDLSPREKDKLLIFTAGLVAERRLARGVKLNYPEAMAYISAALLEGARDGQTVAELMHFGTTLLSREQVMEGVPEMIPEIQIEATFPDGTKLVTVHQPIA</sequence>
<organism>
    <name type="scientific">Ectopseudomonas mendocina (strain ymp)</name>
    <name type="common">Pseudomonas mendocina</name>
    <dbReference type="NCBI Taxonomy" id="399739"/>
    <lineage>
        <taxon>Bacteria</taxon>
        <taxon>Pseudomonadati</taxon>
        <taxon>Pseudomonadota</taxon>
        <taxon>Gammaproteobacteria</taxon>
        <taxon>Pseudomonadales</taxon>
        <taxon>Pseudomonadaceae</taxon>
        <taxon>Ectopseudomonas</taxon>
    </lineage>
</organism>
<dbReference type="EC" id="3.5.1.5" evidence="1"/>
<dbReference type="EMBL" id="CP000680">
    <property type="protein sequence ID" value="ABP83463.1"/>
    <property type="molecule type" value="Genomic_DNA"/>
</dbReference>
<dbReference type="SMR" id="A4XQ47"/>
<dbReference type="STRING" id="399739.Pmen_0695"/>
<dbReference type="KEGG" id="pmy:Pmen_0695"/>
<dbReference type="PATRIC" id="fig|399739.8.peg.703"/>
<dbReference type="eggNOG" id="COG0831">
    <property type="taxonomic scope" value="Bacteria"/>
</dbReference>
<dbReference type="HOGENOM" id="CLU_145825_1_0_6"/>
<dbReference type="OrthoDB" id="9797217at2"/>
<dbReference type="UniPathway" id="UPA00258">
    <property type="reaction ID" value="UER00370"/>
</dbReference>
<dbReference type="GO" id="GO:0005737">
    <property type="term" value="C:cytoplasm"/>
    <property type="evidence" value="ECO:0007669"/>
    <property type="project" value="UniProtKB-SubCell"/>
</dbReference>
<dbReference type="GO" id="GO:0016151">
    <property type="term" value="F:nickel cation binding"/>
    <property type="evidence" value="ECO:0007669"/>
    <property type="project" value="InterPro"/>
</dbReference>
<dbReference type="GO" id="GO:0009039">
    <property type="term" value="F:urease activity"/>
    <property type="evidence" value="ECO:0007669"/>
    <property type="project" value="UniProtKB-UniRule"/>
</dbReference>
<dbReference type="GO" id="GO:0043419">
    <property type="term" value="P:urea catabolic process"/>
    <property type="evidence" value="ECO:0007669"/>
    <property type="project" value="UniProtKB-UniRule"/>
</dbReference>
<dbReference type="CDD" id="cd00390">
    <property type="entry name" value="Urease_gamma"/>
    <property type="match status" value="1"/>
</dbReference>
<dbReference type="Gene3D" id="3.30.280.10">
    <property type="entry name" value="Urease, gamma-like subunit"/>
    <property type="match status" value="1"/>
</dbReference>
<dbReference type="HAMAP" id="MF_00739">
    <property type="entry name" value="Urease_gamma"/>
    <property type="match status" value="1"/>
</dbReference>
<dbReference type="InterPro" id="IPR012010">
    <property type="entry name" value="Urease_gamma"/>
</dbReference>
<dbReference type="InterPro" id="IPR002026">
    <property type="entry name" value="Urease_gamma/gamma-beta_su"/>
</dbReference>
<dbReference type="InterPro" id="IPR036463">
    <property type="entry name" value="Urease_gamma_sf"/>
</dbReference>
<dbReference type="InterPro" id="IPR050069">
    <property type="entry name" value="Urease_subunit"/>
</dbReference>
<dbReference type="NCBIfam" id="NF009712">
    <property type="entry name" value="PRK13241.1"/>
    <property type="match status" value="1"/>
</dbReference>
<dbReference type="NCBIfam" id="TIGR00193">
    <property type="entry name" value="urease_gam"/>
    <property type="match status" value="1"/>
</dbReference>
<dbReference type="PANTHER" id="PTHR33569">
    <property type="entry name" value="UREASE"/>
    <property type="match status" value="1"/>
</dbReference>
<dbReference type="PANTHER" id="PTHR33569:SF1">
    <property type="entry name" value="UREASE"/>
    <property type="match status" value="1"/>
</dbReference>
<dbReference type="Pfam" id="PF00547">
    <property type="entry name" value="Urease_gamma"/>
    <property type="match status" value="1"/>
</dbReference>
<dbReference type="PIRSF" id="PIRSF001223">
    <property type="entry name" value="Urease_gamma"/>
    <property type="match status" value="1"/>
</dbReference>
<dbReference type="SUPFAM" id="SSF54111">
    <property type="entry name" value="Urease, gamma-subunit"/>
    <property type="match status" value="1"/>
</dbReference>
<keyword id="KW-0963">Cytoplasm</keyword>
<keyword id="KW-0378">Hydrolase</keyword>
<accession>A4XQ47</accession>
<feature type="chain" id="PRO_1000046355" description="Urease subunit gamma">
    <location>
        <begin position="1"/>
        <end position="100"/>
    </location>
</feature>
<gene>
    <name evidence="1" type="primary">ureA</name>
    <name type="ordered locus">Pmen_0695</name>
</gene>
<comment type="catalytic activity">
    <reaction evidence="1">
        <text>urea + 2 H2O + H(+) = hydrogencarbonate + 2 NH4(+)</text>
        <dbReference type="Rhea" id="RHEA:20557"/>
        <dbReference type="ChEBI" id="CHEBI:15377"/>
        <dbReference type="ChEBI" id="CHEBI:15378"/>
        <dbReference type="ChEBI" id="CHEBI:16199"/>
        <dbReference type="ChEBI" id="CHEBI:17544"/>
        <dbReference type="ChEBI" id="CHEBI:28938"/>
        <dbReference type="EC" id="3.5.1.5"/>
    </reaction>
</comment>
<comment type="pathway">
    <text evidence="1">Nitrogen metabolism; urea degradation; CO(2) and NH(3) from urea (urease route): step 1/1.</text>
</comment>
<comment type="subunit">
    <text evidence="1">Heterotrimer of UreA (gamma), UreB (beta) and UreC (alpha) subunits. Three heterotrimers associate to form the active enzyme.</text>
</comment>
<comment type="subcellular location">
    <subcellularLocation>
        <location evidence="1">Cytoplasm</location>
    </subcellularLocation>
</comment>
<comment type="similarity">
    <text evidence="1">Belongs to the urease gamma subunit family.</text>
</comment>
<evidence type="ECO:0000255" key="1">
    <source>
        <dbReference type="HAMAP-Rule" id="MF_00739"/>
    </source>
</evidence>